<comment type="function">
    <text evidence="1">Binds directly to 23S rRNA. The L1 stalk is quite mobile in the ribosome, and is involved in E site tRNA release.</text>
</comment>
<comment type="function">
    <text evidence="1">Protein L1 is also a translational repressor protein, it controls the translation of the L11 operon by binding to its mRNA.</text>
</comment>
<comment type="subunit">
    <text evidence="1">Part of the 50S ribosomal subunit.</text>
</comment>
<comment type="similarity">
    <text evidence="1">Belongs to the universal ribosomal protein uL1 family.</text>
</comment>
<accession>A8AKU2</accession>
<protein>
    <recommendedName>
        <fullName evidence="1">Large ribosomal subunit protein uL1</fullName>
    </recommendedName>
    <alternativeName>
        <fullName evidence="2">50S ribosomal protein L1</fullName>
    </alternativeName>
</protein>
<gene>
    <name evidence="1" type="primary">rplA</name>
    <name type="ordered locus">CKO_03006</name>
</gene>
<sequence length="235" mass="24875">MAKLTKRMRVIREKVDATKQYDINEAISLLKELATAKFVESVDVAVNLGIDARKSDQNVRGATVLPHGTGRSVRVAVFTQGANAEAAKAAGAELVGMEDLAEQIKKGEMNFDVVIASPDAMRVVGQLGQVLGPRGLMPNPKVGTVTPNVAEAVKNAKAGQVRYRNDKNGIIHTTIGKVDFDADKLKENLEALLVALKKAKPTQAKGVYIKKVSISTTMGAGVAVDQSGLTATVAN</sequence>
<feature type="chain" id="PRO_1000051905" description="Large ribosomal subunit protein uL1">
    <location>
        <begin position="1"/>
        <end position="235"/>
    </location>
</feature>
<name>RL1_CITK8</name>
<keyword id="KW-1185">Reference proteome</keyword>
<keyword id="KW-0678">Repressor</keyword>
<keyword id="KW-0687">Ribonucleoprotein</keyword>
<keyword id="KW-0689">Ribosomal protein</keyword>
<keyword id="KW-0694">RNA-binding</keyword>
<keyword id="KW-0699">rRNA-binding</keyword>
<keyword id="KW-0810">Translation regulation</keyword>
<keyword id="KW-0820">tRNA-binding</keyword>
<evidence type="ECO:0000255" key="1">
    <source>
        <dbReference type="HAMAP-Rule" id="MF_01318"/>
    </source>
</evidence>
<evidence type="ECO:0000305" key="2"/>
<organism>
    <name type="scientific">Citrobacter koseri (strain ATCC BAA-895 / CDC 4225-83 / SGSC4696)</name>
    <dbReference type="NCBI Taxonomy" id="290338"/>
    <lineage>
        <taxon>Bacteria</taxon>
        <taxon>Pseudomonadati</taxon>
        <taxon>Pseudomonadota</taxon>
        <taxon>Gammaproteobacteria</taxon>
        <taxon>Enterobacterales</taxon>
        <taxon>Enterobacteriaceae</taxon>
        <taxon>Citrobacter</taxon>
    </lineage>
</organism>
<reference key="1">
    <citation type="submission" date="2007-08" db="EMBL/GenBank/DDBJ databases">
        <authorList>
            <consortium name="The Citrobacter koseri Genome Sequencing Project"/>
            <person name="McClelland M."/>
            <person name="Sanderson E.K."/>
            <person name="Porwollik S."/>
            <person name="Spieth J."/>
            <person name="Clifton W.S."/>
            <person name="Latreille P."/>
            <person name="Courtney L."/>
            <person name="Wang C."/>
            <person name="Pepin K."/>
            <person name="Bhonagiri V."/>
            <person name="Nash W."/>
            <person name="Johnson M."/>
            <person name="Thiruvilangam P."/>
            <person name="Wilson R."/>
        </authorList>
    </citation>
    <scope>NUCLEOTIDE SEQUENCE [LARGE SCALE GENOMIC DNA]</scope>
    <source>
        <strain>ATCC BAA-895 / CDC 4225-83 / SGSC4696</strain>
    </source>
</reference>
<proteinExistence type="inferred from homology"/>
<dbReference type="EMBL" id="CP000822">
    <property type="protein sequence ID" value="ABV14106.1"/>
    <property type="molecule type" value="Genomic_DNA"/>
</dbReference>
<dbReference type="RefSeq" id="WP_012133813.1">
    <property type="nucleotide sequence ID" value="NC_009792.1"/>
</dbReference>
<dbReference type="SMR" id="A8AKU2"/>
<dbReference type="STRING" id="290338.CKO_03006"/>
<dbReference type="GeneID" id="45136818"/>
<dbReference type="KEGG" id="cko:CKO_03006"/>
<dbReference type="HOGENOM" id="CLU_062853_0_0_6"/>
<dbReference type="OrthoDB" id="9803740at2"/>
<dbReference type="Proteomes" id="UP000008148">
    <property type="component" value="Chromosome"/>
</dbReference>
<dbReference type="GO" id="GO:0022625">
    <property type="term" value="C:cytosolic large ribosomal subunit"/>
    <property type="evidence" value="ECO:0007669"/>
    <property type="project" value="TreeGrafter"/>
</dbReference>
<dbReference type="GO" id="GO:0019843">
    <property type="term" value="F:rRNA binding"/>
    <property type="evidence" value="ECO:0007669"/>
    <property type="project" value="UniProtKB-UniRule"/>
</dbReference>
<dbReference type="GO" id="GO:0003735">
    <property type="term" value="F:structural constituent of ribosome"/>
    <property type="evidence" value="ECO:0007669"/>
    <property type="project" value="InterPro"/>
</dbReference>
<dbReference type="GO" id="GO:0000049">
    <property type="term" value="F:tRNA binding"/>
    <property type="evidence" value="ECO:0007669"/>
    <property type="project" value="UniProtKB-KW"/>
</dbReference>
<dbReference type="GO" id="GO:0006417">
    <property type="term" value="P:regulation of translation"/>
    <property type="evidence" value="ECO:0007669"/>
    <property type="project" value="UniProtKB-KW"/>
</dbReference>
<dbReference type="GO" id="GO:0006412">
    <property type="term" value="P:translation"/>
    <property type="evidence" value="ECO:0007669"/>
    <property type="project" value="UniProtKB-UniRule"/>
</dbReference>
<dbReference type="CDD" id="cd00403">
    <property type="entry name" value="Ribosomal_L1"/>
    <property type="match status" value="1"/>
</dbReference>
<dbReference type="FunFam" id="3.40.50.790:FF:000001">
    <property type="entry name" value="50S ribosomal protein L1"/>
    <property type="match status" value="1"/>
</dbReference>
<dbReference type="Gene3D" id="3.30.190.20">
    <property type="match status" value="1"/>
</dbReference>
<dbReference type="Gene3D" id="3.40.50.790">
    <property type="match status" value="1"/>
</dbReference>
<dbReference type="HAMAP" id="MF_01318_B">
    <property type="entry name" value="Ribosomal_uL1_B"/>
    <property type="match status" value="1"/>
</dbReference>
<dbReference type="InterPro" id="IPR005878">
    <property type="entry name" value="Ribosom_uL1_bac-type"/>
</dbReference>
<dbReference type="InterPro" id="IPR002143">
    <property type="entry name" value="Ribosomal_uL1"/>
</dbReference>
<dbReference type="InterPro" id="IPR023674">
    <property type="entry name" value="Ribosomal_uL1-like"/>
</dbReference>
<dbReference type="InterPro" id="IPR028364">
    <property type="entry name" value="Ribosomal_uL1/biogenesis"/>
</dbReference>
<dbReference type="InterPro" id="IPR016095">
    <property type="entry name" value="Ribosomal_uL1_3-a/b-sand"/>
</dbReference>
<dbReference type="InterPro" id="IPR023673">
    <property type="entry name" value="Ribosomal_uL1_CS"/>
</dbReference>
<dbReference type="NCBIfam" id="TIGR01169">
    <property type="entry name" value="rplA_bact"/>
    <property type="match status" value="1"/>
</dbReference>
<dbReference type="PANTHER" id="PTHR36427">
    <property type="entry name" value="54S RIBOSOMAL PROTEIN L1, MITOCHONDRIAL"/>
    <property type="match status" value="1"/>
</dbReference>
<dbReference type="PANTHER" id="PTHR36427:SF3">
    <property type="entry name" value="LARGE RIBOSOMAL SUBUNIT PROTEIN UL1M"/>
    <property type="match status" value="1"/>
</dbReference>
<dbReference type="Pfam" id="PF00687">
    <property type="entry name" value="Ribosomal_L1"/>
    <property type="match status" value="1"/>
</dbReference>
<dbReference type="PIRSF" id="PIRSF002155">
    <property type="entry name" value="Ribosomal_L1"/>
    <property type="match status" value="1"/>
</dbReference>
<dbReference type="SUPFAM" id="SSF56808">
    <property type="entry name" value="Ribosomal protein L1"/>
    <property type="match status" value="1"/>
</dbReference>
<dbReference type="PROSITE" id="PS01199">
    <property type="entry name" value="RIBOSOMAL_L1"/>
    <property type="match status" value="1"/>
</dbReference>